<evidence type="ECO:0000250" key="1">
    <source>
        <dbReference type="UniProtKB" id="Q96HY6"/>
    </source>
</evidence>
<evidence type="ECO:0000255" key="2"/>
<evidence type="ECO:0000256" key="3">
    <source>
        <dbReference type="SAM" id="MobiDB-lite"/>
    </source>
</evidence>
<evidence type="ECO:0000305" key="4"/>
<evidence type="ECO:0000312" key="5">
    <source>
        <dbReference type="WormBase" id="ZK1236.7a"/>
    </source>
</evidence>
<evidence type="ECO:0000312" key="6">
    <source>
        <dbReference type="WormBase" id="ZK1236.7b"/>
    </source>
</evidence>
<gene>
    <name evidence="6" type="primary">ufbp-1</name>
    <name evidence="6" type="ORF">ZK1236.7</name>
</gene>
<accession>P34623</accession>
<accession>H1ZUW3</accession>
<accession>Q05035</accession>
<dbReference type="EMBL" id="FO080723">
    <property type="protein sequence ID" value="CCD66167.1"/>
    <property type="molecule type" value="Genomic_DNA"/>
</dbReference>
<dbReference type="EMBL" id="FO080723">
    <property type="protein sequence ID" value="CCF23348.1"/>
    <property type="molecule type" value="Genomic_DNA"/>
</dbReference>
<dbReference type="PIR" id="S44785">
    <property type="entry name" value="S44785"/>
</dbReference>
<dbReference type="PIR" id="S44893">
    <property type="entry name" value="S44893"/>
</dbReference>
<dbReference type="RefSeq" id="NP_001254959.1">
    <molecule id="P34623-2"/>
    <property type="nucleotide sequence ID" value="NM_001268030.4"/>
</dbReference>
<dbReference type="RefSeq" id="NP_001254960.1">
    <property type="nucleotide sequence ID" value="NM_001268031.1"/>
</dbReference>
<dbReference type="RefSeq" id="NP_001368103.1">
    <molecule id="P34623-1"/>
    <property type="nucleotide sequence ID" value="NM_001379832.1"/>
</dbReference>
<dbReference type="SMR" id="P34623"/>
<dbReference type="BioGRID" id="41398">
    <property type="interactions" value="4"/>
</dbReference>
<dbReference type="FunCoup" id="P34623">
    <property type="interactions" value="1624"/>
</dbReference>
<dbReference type="STRING" id="6239.ZK1236.7a.1"/>
<dbReference type="PaxDb" id="6239-ZK1236.7a"/>
<dbReference type="PeptideAtlas" id="P34623"/>
<dbReference type="EnsemblMetazoa" id="ZK1236.7a.1">
    <molecule id="P34623-2"/>
    <property type="protein sequence ID" value="ZK1236.7a.1"/>
    <property type="gene ID" value="WBGene00022865"/>
</dbReference>
<dbReference type="EnsemblMetazoa" id="ZK1236.7b.1">
    <molecule id="P34623-1"/>
    <property type="protein sequence ID" value="ZK1236.7b.1"/>
    <property type="gene ID" value="WBGene00022865"/>
</dbReference>
<dbReference type="GeneID" id="176194"/>
<dbReference type="KEGG" id="cel:CELE_ZK1236.7"/>
<dbReference type="AGR" id="WB:WBGene00022865"/>
<dbReference type="CTD" id="176194"/>
<dbReference type="WormBase" id="ZK1236.7a">
    <molecule id="P34623-2"/>
    <property type="protein sequence ID" value="CE29628"/>
    <property type="gene ID" value="WBGene00022865"/>
    <property type="gene designation" value="ufbp-1"/>
</dbReference>
<dbReference type="WormBase" id="ZK1236.7b">
    <molecule id="P34623-1"/>
    <property type="protein sequence ID" value="CE46881"/>
    <property type="gene ID" value="WBGene00022865"/>
    <property type="gene designation" value="ufbp-1"/>
</dbReference>
<dbReference type="eggNOG" id="KOG3054">
    <property type="taxonomic scope" value="Eukaryota"/>
</dbReference>
<dbReference type="GeneTree" id="ENSGT00390000017193"/>
<dbReference type="HOGENOM" id="CLU_059562_1_0_1"/>
<dbReference type="InParanoid" id="P34623"/>
<dbReference type="OMA" id="EFTRECN"/>
<dbReference type="OrthoDB" id="2285710at2759"/>
<dbReference type="PhylomeDB" id="P34623"/>
<dbReference type="PRO" id="PR:P34623"/>
<dbReference type="Proteomes" id="UP000001940">
    <property type="component" value="Chromosome III"/>
</dbReference>
<dbReference type="Bgee" id="WBGene00022865">
    <property type="expression patterns" value="Expressed in adult organism and 4 other cell types or tissues"/>
</dbReference>
<dbReference type="GO" id="GO:0005789">
    <property type="term" value="C:endoplasmic reticulum membrane"/>
    <property type="evidence" value="ECO:0007669"/>
    <property type="project" value="UniProtKB-SubCell"/>
</dbReference>
<dbReference type="GO" id="GO:0005634">
    <property type="term" value="C:nucleus"/>
    <property type="evidence" value="ECO:0007005"/>
    <property type="project" value="WormBase"/>
</dbReference>
<dbReference type="GO" id="GO:0044389">
    <property type="term" value="F:ubiquitin-like protein ligase binding"/>
    <property type="evidence" value="ECO:0000318"/>
    <property type="project" value="GO_Central"/>
</dbReference>
<dbReference type="FunFam" id="1.10.10.10:FF:000143">
    <property type="entry name" value="DDRGK domain-containing protein 1"/>
    <property type="match status" value="1"/>
</dbReference>
<dbReference type="Gene3D" id="1.10.10.10">
    <property type="entry name" value="Winged helix-like DNA-binding domain superfamily/Winged helix DNA-binding domain"/>
    <property type="match status" value="1"/>
</dbReference>
<dbReference type="InterPro" id="IPR019153">
    <property type="entry name" value="DDRGK_dom-contain"/>
</dbReference>
<dbReference type="InterPro" id="IPR050899">
    <property type="entry name" value="DDRGK_domain-containing"/>
</dbReference>
<dbReference type="InterPro" id="IPR036388">
    <property type="entry name" value="WH-like_DNA-bd_sf"/>
</dbReference>
<dbReference type="InterPro" id="IPR036390">
    <property type="entry name" value="WH_DNA-bd_sf"/>
</dbReference>
<dbReference type="PANTHER" id="PTHR48176">
    <property type="entry name" value="DDRGK DOMAIN-CONTAINING PROTEIN 1"/>
    <property type="match status" value="1"/>
</dbReference>
<dbReference type="PANTHER" id="PTHR48176:SF1">
    <property type="entry name" value="DDRGK DOMAIN-CONTAINING PROTEIN 1"/>
    <property type="match status" value="1"/>
</dbReference>
<dbReference type="Pfam" id="PF09756">
    <property type="entry name" value="DDRGK"/>
    <property type="match status" value="1"/>
</dbReference>
<dbReference type="SMART" id="SM01128">
    <property type="entry name" value="DDRGK"/>
    <property type="match status" value="1"/>
</dbReference>
<dbReference type="SUPFAM" id="SSF46785">
    <property type="entry name" value="Winged helix' DNA-binding domain"/>
    <property type="match status" value="1"/>
</dbReference>
<proteinExistence type="inferred from homology"/>
<sequence length="302" mass="35071">MDPLLLGSVGVLVLAVTLIIWRLLKLQWDEKAARQRTDMLLAMNEGAGGSDERRGANVAGGMRRNARRRVNRDEQEDGFVNHMMNDGEDVEDLDGGAEQFEYDEDGKKIGKRKAAKLQAKEEKRQMREYEVREREERKRREEEREKKRDEERAKEEADEKAEEERLRKEREEKERKEHEEYLAMKASFAIEEEGTDAIEGEEAENLIRDFVDYVKTNKVVNIDELSSHFGLKSEDAVNRLQHFIEEGLVQGVMDDRGKFIYISDEEFAAVAKFINQRGRVSIHEIAEQSNRLIRLETPSAAE</sequence>
<feature type="chain" id="PRO_0000065566" description="DDRGK domain-containing protein 1" evidence="4">
    <location>
        <begin position="1"/>
        <end position="302"/>
    </location>
</feature>
<feature type="transmembrane region" description="Helical" evidence="2">
    <location>
        <begin position="1"/>
        <end position="21"/>
    </location>
</feature>
<feature type="topological domain" description="Cytoplasmic" evidence="4">
    <location>
        <begin position="22"/>
        <end position="302"/>
    </location>
</feature>
<feature type="region of interest" description="Disordered" evidence="3">
    <location>
        <begin position="101"/>
        <end position="178"/>
    </location>
</feature>
<feature type="compositionally biased region" description="Basic and acidic residues" evidence="3">
    <location>
        <begin position="118"/>
        <end position="178"/>
    </location>
</feature>
<feature type="splice variant" id="VSP_057668" description="In isoform a." evidence="4">
    <original>M</original>
    <variation>MDNNQEKSTDSPYSFGGTKDDGM</variation>
    <location>
        <position position="1"/>
    </location>
</feature>
<keyword id="KW-0025">Alternative splicing</keyword>
<keyword id="KW-0256">Endoplasmic reticulum</keyword>
<keyword id="KW-0472">Membrane</keyword>
<keyword id="KW-1185">Reference proteome</keyword>
<keyword id="KW-0812">Transmembrane</keyword>
<keyword id="KW-1133">Transmembrane helix</keyword>
<keyword id="KW-0833">Ubl conjugation pathway</keyword>
<name>DDRGK_CAEEL</name>
<comment type="function">
    <text evidence="1">Substrate adapter for ufmylation, the covalent attachment of the ubiquitin-like modifier ufm-1 to substrate proteins.</text>
</comment>
<comment type="subcellular location">
    <subcellularLocation>
        <location evidence="1">Endoplasmic reticulum membrane</location>
        <topology evidence="1">Single-pass membrane protein</topology>
    </subcellularLocation>
</comment>
<comment type="alternative products">
    <event type="alternative splicing"/>
    <isoform>
        <id>P34623-1</id>
        <name evidence="6">b</name>
        <sequence type="displayed"/>
    </isoform>
    <isoform>
        <id>P34623-2</id>
        <name evidence="5">a</name>
        <sequence type="described" ref="VSP_057668"/>
    </isoform>
</comment>
<comment type="similarity">
    <text evidence="4">Belongs to the DDRGK1 family.</text>
</comment>
<reference key="1">
    <citation type="journal article" date="1994" name="Nature">
        <title>2.2 Mb of contiguous nucleotide sequence from chromosome III of C. elegans.</title>
        <authorList>
            <person name="Wilson R."/>
            <person name="Ainscough R."/>
            <person name="Anderson K."/>
            <person name="Baynes C."/>
            <person name="Berks M."/>
            <person name="Bonfield J."/>
            <person name="Burton J."/>
            <person name="Connell M."/>
            <person name="Copsey T."/>
            <person name="Cooper J."/>
            <person name="Coulson A."/>
            <person name="Craxton M."/>
            <person name="Dear S."/>
            <person name="Du Z."/>
            <person name="Durbin R."/>
            <person name="Favello A."/>
            <person name="Fraser A."/>
            <person name="Fulton L."/>
            <person name="Gardner A."/>
            <person name="Green P."/>
            <person name="Hawkins T."/>
            <person name="Hillier L."/>
            <person name="Jier M."/>
            <person name="Johnston L."/>
            <person name="Jones M."/>
            <person name="Kershaw J."/>
            <person name="Kirsten J."/>
            <person name="Laisster N."/>
            <person name="Latreille P."/>
            <person name="Lightning J."/>
            <person name="Lloyd C."/>
            <person name="Mortimore B."/>
            <person name="O'Callaghan M."/>
            <person name="Parsons J."/>
            <person name="Percy C."/>
            <person name="Rifken L."/>
            <person name="Roopra A."/>
            <person name="Saunders D."/>
            <person name="Shownkeen R."/>
            <person name="Sims M."/>
            <person name="Smaldon N."/>
            <person name="Smith A."/>
            <person name="Smith M."/>
            <person name="Sonnhammer E."/>
            <person name="Staden R."/>
            <person name="Sulston J."/>
            <person name="Thierry-Mieg J."/>
            <person name="Thomas K."/>
            <person name="Vaudin M."/>
            <person name="Vaughan K."/>
            <person name="Waterston R."/>
            <person name="Watson A."/>
            <person name="Weinstock L."/>
            <person name="Wilkinson-Sproat J."/>
            <person name="Wohldman P."/>
        </authorList>
    </citation>
    <scope>NUCLEOTIDE SEQUENCE [LARGE SCALE GENOMIC DNA]</scope>
    <source>
        <strain>Bristol N2</strain>
    </source>
</reference>
<reference key="2">
    <citation type="journal article" date="1998" name="Science">
        <title>Genome sequence of the nematode C. elegans: a platform for investigating biology.</title>
        <authorList>
            <consortium name="The C. elegans sequencing consortium"/>
        </authorList>
    </citation>
    <scope>NUCLEOTIDE SEQUENCE [LARGE SCALE GENOMIC DNA]</scope>
    <source>
        <strain>Bristol N2</strain>
    </source>
</reference>
<organism>
    <name type="scientific">Caenorhabditis elegans</name>
    <dbReference type="NCBI Taxonomy" id="6239"/>
    <lineage>
        <taxon>Eukaryota</taxon>
        <taxon>Metazoa</taxon>
        <taxon>Ecdysozoa</taxon>
        <taxon>Nematoda</taxon>
        <taxon>Chromadorea</taxon>
        <taxon>Rhabditida</taxon>
        <taxon>Rhabditina</taxon>
        <taxon>Rhabditomorpha</taxon>
        <taxon>Rhabditoidea</taxon>
        <taxon>Rhabditidae</taxon>
        <taxon>Peloderinae</taxon>
        <taxon>Caenorhabditis</taxon>
    </lineage>
</organism>
<protein>
    <recommendedName>
        <fullName evidence="4">DDRGK domain-containing protein 1</fullName>
    </recommendedName>
    <alternativeName>
        <fullName evidence="6">Ufm-binding protein 1</fullName>
    </alternativeName>
</protein>